<evidence type="ECO:0000255" key="1"/>
<evidence type="ECO:0000255" key="2">
    <source>
        <dbReference type="PROSITE-ProRule" id="PRU00806"/>
    </source>
</evidence>
<evidence type="ECO:0000305" key="3"/>
<feature type="signal peptide" evidence="1">
    <location>
        <begin position="1"/>
        <end position="32"/>
    </location>
</feature>
<feature type="chain" id="PRO_0000296159" description="Putative cysteine-rich repeat secretory protein 31">
    <location>
        <begin position="33"/>
        <end position="263"/>
    </location>
</feature>
<feature type="domain" description="Gnk2-homologous 1" evidence="2">
    <location>
        <begin position="39"/>
        <end position="141"/>
    </location>
</feature>
<feature type="domain" description="Gnk2-homologous 2" evidence="2">
    <location>
        <begin position="146"/>
        <end position="260"/>
    </location>
</feature>
<reference key="1">
    <citation type="journal article" date="2000" name="DNA Res.">
        <title>Structural analysis of Arabidopsis thaliana chromosome 3. I. Sequence features of the regions of 4,504,864 bp covered by sixty P1 and TAC clones.</title>
        <authorList>
            <person name="Sato S."/>
            <person name="Nakamura Y."/>
            <person name="Kaneko T."/>
            <person name="Katoh T."/>
            <person name="Asamizu E."/>
            <person name="Tabata S."/>
        </authorList>
    </citation>
    <scope>NUCLEOTIDE SEQUENCE [LARGE SCALE GENOMIC DNA]</scope>
    <source>
        <strain>cv. Columbia</strain>
    </source>
</reference>
<reference key="2">
    <citation type="journal article" date="2017" name="Plant J.">
        <title>Araport11: a complete reannotation of the Arabidopsis thaliana reference genome.</title>
        <authorList>
            <person name="Cheng C.Y."/>
            <person name="Krishnakumar V."/>
            <person name="Chan A.P."/>
            <person name="Thibaud-Nissen F."/>
            <person name="Schobel S."/>
            <person name="Town C.D."/>
        </authorList>
    </citation>
    <scope>GENOME REANNOTATION</scope>
    <source>
        <strain>cv. Columbia</strain>
    </source>
</reference>
<reference key="3">
    <citation type="journal article" date="2001" name="Plant Physiol.">
        <title>A superfamily of proteins with novel cysteine-rich repeats.</title>
        <authorList>
            <person name="Chen Z."/>
        </authorList>
    </citation>
    <scope>GENE FAMILY ORGANIZATION</scope>
    <scope>NOMENCLATURE</scope>
</reference>
<accession>Q9LRK6</accession>
<comment type="subcellular location">
    <subcellularLocation>
        <location evidence="3">Secreted</location>
    </subcellularLocation>
</comment>
<comment type="similarity">
    <text evidence="3">Belongs to the cysteine-rich repeat secretory protein family.</text>
</comment>
<organism>
    <name type="scientific">Arabidopsis thaliana</name>
    <name type="common">Mouse-ear cress</name>
    <dbReference type="NCBI Taxonomy" id="3702"/>
    <lineage>
        <taxon>Eukaryota</taxon>
        <taxon>Viridiplantae</taxon>
        <taxon>Streptophyta</taxon>
        <taxon>Embryophyta</taxon>
        <taxon>Tracheophyta</taxon>
        <taxon>Spermatophyta</taxon>
        <taxon>Magnoliopsida</taxon>
        <taxon>eudicotyledons</taxon>
        <taxon>Gunneridae</taxon>
        <taxon>Pentapetalae</taxon>
        <taxon>rosids</taxon>
        <taxon>malvids</taxon>
        <taxon>Brassicales</taxon>
        <taxon>Brassicaceae</taxon>
        <taxon>Camelineae</taxon>
        <taxon>Arabidopsis</taxon>
    </lineage>
</organism>
<keyword id="KW-1185">Reference proteome</keyword>
<keyword id="KW-0677">Repeat</keyword>
<keyword id="KW-0964">Secreted</keyword>
<keyword id="KW-0732">Signal</keyword>
<dbReference type="EMBL" id="AB028622">
    <property type="protein sequence ID" value="BAB01384.1"/>
    <property type="molecule type" value="Genomic_DNA"/>
</dbReference>
<dbReference type="EMBL" id="CP002686">
    <property type="protein sequence ID" value="AEE76577.1"/>
    <property type="molecule type" value="Genomic_DNA"/>
</dbReference>
<dbReference type="RefSeq" id="NP_188839.1">
    <property type="nucleotide sequence ID" value="NM_113097.1"/>
</dbReference>
<dbReference type="SMR" id="Q9LRK6"/>
<dbReference type="PaxDb" id="3702-AT3G22010.1"/>
<dbReference type="EnsemblPlants" id="AT3G22010.1">
    <property type="protein sequence ID" value="AT3G22010.1"/>
    <property type="gene ID" value="AT3G22010"/>
</dbReference>
<dbReference type="GeneID" id="821761"/>
<dbReference type="Gramene" id="AT3G22010.1">
    <property type="protein sequence ID" value="AT3G22010.1"/>
    <property type="gene ID" value="AT3G22010"/>
</dbReference>
<dbReference type="KEGG" id="ath:AT3G22010"/>
<dbReference type="Araport" id="AT3G22010"/>
<dbReference type="TAIR" id="AT3G22010"/>
<dbReference type="eggNOG" id="ENOG502QPWH">
    <property type="taxonomic scope" value="Eukaryota"/>
</dbReference>
<dbReference type="HOGENOM" id="CLU_000288_35_0_1"/>
<dbReference type="InParanoid" id="Q9LRK6"/>
<dbReference type="OMA" id="QCVSLTI"/>
<dbReference type="OrthoDB" id="1040941at2759"/>
<dbReference type="PhylomeDB" id="Q9LRK6"/>
<dbReference type="PRO" id="PR:Q9LRK6"/>
<dbReference type="Proteomes" id="UP000006548">
    <property type="component" value="Chromosome 3"/>
</dbReference>
<dbReference type="ExpressionAtlas" id="Q9LRK6">
    <property type="expression patterns" value="baseline"/>
</dbReference>
<dbReference type="GO" id="GO:0005576">
    <property type="term" value="C:extracellular region"/>
    <property type="evidence" value="ECO:0007669"/>
    <property type="project" value="UniProtKB-SubCell"/>
</dbReference>
<dbReference type="CDD" id="cd23509">
    <property type="entry name" value="Gnk2-like"/>
    <property type="match status" value="2"/>
</dbReference>
<dbReference type="Gene3D" id="3.30.430.20">
    <property type="entry name" value="Gnk2 domain, C-X8-C-X2-C motif"/>
    <property type="match status" value="2"/>
</dbReference>
<dbReference type="InterPro" id="IPR050581">
    <property type="entry name" value="CRR_secretory_protein"/>
</dbReference>
<dbReference type="InterPro" id="IPR002902">
    <property type="entry name" value="GNK2"/>
</dbReference>
<dbReference type="InterPro" id="IPR038408">
    <property type="entry name" value="GNK2_sf"/>
</dbReference>
<dbReference type="PANTHER" id="PTHR32411:SF54">
    <property type="entry name" value="CYSTEINE-RICH REPEAT SECRETORY PROTEIN 29-RELATED"/>
    <property type="match status" value="1"/>
</dbReference>
<dbReference type="PANTHER" id="PTHR32411">
    <property type="entry name" value="CYSTEINE-RICH REPEAT SECRETORY PROTEIN 38-RELATED"/>
    <property type="match status" value="1"/>
</dbReference>
<dbReference type="Pfam" id="PF01657">
    <property type="entry name" value="Stress-antifung"/>
    <property type="match status" value="2"/>
</dbReference>
<dbReference type="PROSITE" id="PS51473">
    <property type="entry name" value="GNK2"/>
    <property type="match status" value="2"/>
</dbReference>
<sequence>MHNSYSLSKRLVLVLFLAVVATQLFLIRNVSSLNLTNAYLHHKCLISQGKYKPGSQYEKNLNSHIDLIINSTFRNGFGHMTTAMGSPNMVNIIFQCRGDSYQSKCRSCFAAGISGEMRCPRNKGGIIWFDQCFVEITAIEVMEVNYDNNFYMHNPNKVMGDAKSFNKETMAFLEQLALEATRKDNMEDGMMALYSAREKMVGTKKLYAMVQCTRDVFMFKTMCKECLERIISQYPKCCDGKQGGRVLGTSCNFRYEFYPFLRT</sequence>
<protein>
    <recommendedName>
        <fullName>Putative cysteine-rich repeat secretory protein 31</fullName>
    </recommendedName>
</protein>
<proteinExistence type="inferred from homology"/>
<gene>
    <name type="primary">CRRSP31</name>
    <name type="ordered locus">At3g22010</name>
    <name type="ORF">MZN24.19</name>
</gene>
<name>CRR31_ARATH</name>